<sequence length="311" mass="34960">MKTGGLSDFADFGEEDANCTQGIQWIKDVFTDCVDTDLKLLGFIIGLISLALWLIPLFPQLWQNYKTKKCEGLSLAFLFFWLVGDTCNMLGAILTNQQPIQKIIGVYYIIQDLVLWTQYGYYLKIYNRPTTSSARSNTIVVPVLALASVGSFFVFESALPPVGDHRVKRSFLESLNHQEGLPLEGILKMWPIFTSYTDMLGYIIGSMAAVCYFGGRIPQIIKNYRHSSCEGLSLTMFYIIVAANFTYGISVLLATTSWLYLLRHLPWLAGSLGCCCFDAVIISQYYLYRPKTPLAEDTERAGLLNSQDDSD</sequence>
<comment type="function">
    <text evidence="2 3">Amino acid transporter that specifically mediates the pH-dependent export of the cationic amino acids arginine, histidine and lysine from lysosomes (PubMed:22822152). May play a role in the degradation of autophagic substrates in autolysosomes by regulating lysosome function (PubMed:25124690).</text>
</comment>
<comment type="subcellular location">
    <subcellularLocation>
        <location evidence="2">Lysosome membrane</location>
        <topology evidence="2">Multi-pass membrane protein</topology>
    </subcellularLocation>
</comment>
<comment type="domain">
    <text evidence="2">The di-leucine motif mediates lysosomal localization.</text>
</comment>
<comment type="disruption phenotype">
    <text evidence="2">Mutants are viable but develop slowly. They accumulate enlarged lysosomes and show an impaired lysosomal degradation of phagocytic, endocytic, and autophagic cargos.</text>
</comment>
<comment type="similarity">
    <text evidence="4">Belongs to the laat-1 family.</text>
</comment>
<feature type="chain" id="PRO_0000419468" description="Lysosomal amino acid transporter 1">
    <location>
        <begin position="1"/>
        <end position="311"/>
    </location>
</feature>
<feature type="topological domain" description="Lumenal" evidence="1">
    <location>
        <begin position="1"/>
        <end position="37"/>
    </location>
</feature>
<feature type="transmembrane region" description="Helical" evidence="1">
    <location>
        <begin position="38"/>
        <end position="58"/>
    </location>
</feature>
<feature type="topological domain" description="Cytoplasmic" evidence="1">
    <location>
        <begin position="59"/>
        <end position="74"/>
    </location>
</feature>
<feature type="transmembrane region" description="Helical" evidence="1">
    <location>
        <begin position="75"/>
        <end position="95"/>
    </location>
</feature>
<feature type="topological domain" description="Lumenal" evidence="1">
    <location>
        <begin position="96"/>
        <end position="102"/>
    </location>
</feature>
<feature type="transmembrane region" description="Helical" evidence="1">
    <location>
        <begin position="103"/>
        <end position="123"/>
    </location>
</feature>
<feature type="topological domain" description="Cytoplasmic" evidence="1">
    <location>
        <begin position="124"/>
        <end position="138"/>
    </location>
</feature>
<feature type="transmembrane region" description="Helical" evidence="1">
    <location>
        <begin position="139"/>
        <end position="159"/>
    </location>
</feature>
<feature type="topological domain" description="Lumenal" evidence="1">
    <location>
        <begin position="160"/>
        <end position="189"/>
    </location>
</feature>
<feature type="transmembrane region" description="Helical" evidence="1">
    <location>
        <begin position="190"/>
        <end position="210"/>
    </location>
</feature>
<feature type="topological domain" description="Cytoplasmic" evidence="1">
    <location>
        <begin position="211"/>
        <end position="233"/>
    </location>
</feature>
<feature type="transmembrane region" description="Helical" evidence="1">
    <location>
        <begin position="234"/>
        <end position="254"/>
    </location>
</feature>
<feature type="topological domain" description="Lumenal" evidence="1">
    <location>
        <begin position="255"/>
        <end position="266"/>
    </location>
</feature>
<feature type="transmembrane region" description="Helical" evidence="1">
    <location>
        <begin position="267"/>
        <end position="287"/>
    </location>
</feature>
<feature type="topological domain" description="Cytoplasmic" evidence="1">
    <location>
        <begin position="288"/>
        <end position="311"/>
    </location>
</feature>
<feature type="domain" description="PQ-loop 1">
    <location>
        <begin position="55"/>
        <end position="86"/>
    </location>
</feature>
<feature type="domain" description="PQ-loop 2">
    <location>
        <begin position="214"/>
        <end position="245"/>
    </location>
</feature>
<feature type="short sequence motif" description="Di-leucine motif">
    <location>
        <begin position="303"/>
        <end position="304"/>
    </location>
</feature>
<feature type="glycosylation site" description="N-linked (GlcNAc...) asparagine" evidence="1">
    <location>
        <position position="18"/>
    </location>
</feature>
<feature type="mutagenesis site" description="Abolishes the uptake of arginine and lysine." evidence="2">
    <original>P</original>
    <variation>L</variation>
    <location>
        <position position="59"/>
    </location>
</feature>
<feature type="mutagenesis site" description="Abolishes lysosomal localization." evidence="2">
    <location>
        <begin position="303"/>
        <end position="304"/>
    </location>
</feature>
<accession>Q95XZ6</accession>
<gene>
    <name evidence="5" type="primary">laat-1</name>
    <name evidence="5" type="ORF">Y43H11AL.2</name>
</gene>
<name>LAAT1_CAEEL</name>
<organism>
    <name type="scientific">Caenorhabditis elegans</name>
    <dbReference type="NCBI Taxonomy" id="6239"/>
    <lineage>
        <taxon>Eukaryota</taxon>
        <taxon>Metazoa</taxon>
        <taxon>Ecdysozoa</taxon>
        <taxon>Nematoda</taxon>
        <taxon>Chromadorea</taxon>
        <taxon>Rhabditida</taxon>
        <taxon>Rhabditina</taxon>
        <taxon>Rhabditomorpha</taxon>
        <taxon>Rhabditoidea</taxon>
        <taxon>Rhabditidae</taxon>
        <taxon>Peloderinae</taxon>
        <taxon>Caenorhabditis</taxon>
    </lineage>
</organism>
<evidence type="ECO:0000255" key="1"/>
<evidence type="ECO:0000269" key="2">
    <source>
    </source>
</evidence>
<evidence type="ECO:0000269" key="3">
    <source>
    </source>
</evidence>
<evidence type="ECO:0000305" key="4"/>
<evidence type="ECO:0000312" key="5">
    <source>
        <dbReference type="WormBase" id="Y43H11AL.2a"/>
    </source>
</evidence>
<keyword id="KW-0029">Amino-acid transport</keyword>
<keyword id="KW-0325">Glycoprotein</keyword>
<keyword id="KW-0458">Lysosome</keyword>
<keyword id="KW-0472">Membrane</keyword>
<keyword id="KW-1185">Reference proteome</keyword>
<keyword id="KW-0677">Repeat</keyword>
<keyword id="KW-0812">Transmembrane</keyword>
<keyword id="KW-1133">Transmembrane helix</keyword>
<keyword id="KW-0813">Transport</keyword>
<dbReference type="EMBL" id="BX284602">
    <property type="protein sequence ID" value="CCD71489.1"/>
    <property type="molecule type" value="Genomic_DNA"/>
</dbReference>
<dbReference type="RefSeq" id="NP_493686.2">
    <property type="nucleotide sequence ID" value="NM_061285.4"/>
</dbReference>
<dbReference type="SMR" id="Q95XZ6"/>
<dbReference type="FunCoup" id="Q95XZ6">
    <property type="interactions" value="734"/>
</dbReference>
<dbReference type="STRING" id="6239.Y43H11AL.2a.1"/>
<dbReference type="TCDB" id="2.A.43.2.2">
    <property type="family name" value="the lysosomal cystine transporter (lct) family"/>
</dbReference>
<dbReference type="GlyCosmos" id="Q95XZ6">
    <property type="glycosylation" value="1 site, No reported glycans"/>
</dbReference>
<dbReference type="PaxDb" id="6239-Y43H11AL.2"/>
<dbReference type="PeptideAtlas" id="Q95XZ6"/>
<dbReference type="EnsemblMetazoa" id="Y43H11AL.2a.1">
    <property type="protein sequence ID" value="Y43H11AL.2a.1"/>
    <property type="gene ID" value="WBGene00021546"/>
</dbReference>
<dbReference type="GeneID" id="3565323"/>
<dbReference type="KEGG" id="cel:CELE_Y43H11AL.2"/>
<dbReference type="UCSC" id="Y43H11AL.2">
    <property type="organism name" value="c. elegans"/>
</dbReference>
<dbReference type="AGR" id="WB:WBGene00021546"/>
<dbReference type="CTD" id="3565323"/>
<dbReference type="WormBase" id="Y43H11AL.2a">
    <property type="protein sequence ID" value="CE32969"/>
    <property type="gene ID" value="WBGene00021546"/>
    <property type="gene designation" value="laat-1"/>
</dbReference>
<dbReference type="eggNOG" id="KOG2913">
    <property type="taxonomic scope" value="Eukaryota"/>
</dbReference>
<dbReference type="GeneTree" id="ENSGT00940000175512"/>
<dbReference type="HOGENOM" id="CLU_019699_3_0_1"/>
<dbReference type="InParanoid" id="Q95XZ6"/>
<dbReference type="OMA" id="FYQHYVL"/>
<dbReference type="OrthoDB" id="8048523at2759"/>
<dbReference type="PhylomeDB" id="Q95XZ6"/>
<dbReference type="Reactome" id="R-CEL-5223345">
    <property type="pathway name" value="Miscellaneous transport and binding events"/>
</dbReference>
<dbReference type="PRO" id="PR:Q95XZ6"/>
<dbReference type="Proteomes" id="UP000001940">
    <property type="component" value="Chromosome II"/>
</dbReference>
<dbReference type="Bgee" id="WBGene00021546">
    <property type="expression patterns" value="Expressed in pharyngeal muscle cell (C elegans) and 3 other cell types or tissues"/>
</dbReference>
<dbReference type="ExpressionAtlas" id="Q95XZ6">
    <property type="expression patterns" value="baseline and differential"/>
</dbReference>
<dbReference type="GO" id="GO:0005765">
    <property type="term" value="C:lysosomal membrane"/>
    <property type="evidence" value="ECO:0000314"/>
    <property type="project" value="UniProtKB"/>
</dbReference>
<dbReference type="GO" id="GO:0016020">
    <property type="term" value="C:membrane"/>
    <property type="evidence" value="ECO:0000318"/>
    <property type="project" value="GO_Central"/>
</dbReference>
<dbReference type="GO" id="GO:0031090">
    <property type="term" value="C:organelle membrane"/>
    <property type="evidence" value="ECO:0000314"/>
    <property type="project" value="UniProtKB"/>
</dbReference>
<dbReference type="GO" id="GO:0015174">
    <property type="term" value="F:basic amino acid transmembrane transporter activity"/>
    <property type="evidence" value="ECO:0000318"/>
    <property type="project" value="GO_Central"/>
</dbReference>
<dbReference type="GO" id="GO:0061459">
    <property type="term" value="F:L-arginine transmembrane transporter activity"/>
    <property type="evidence" value="ECO:0000314"/>
    <property type="project" value="UniProtKB"/>
</dbReference>
<dbReference type="GO" id="GO:0015189">
    <property type="term" value="F:L-lysine transmembrane transporter activity"/>
    <property type="evidence" value="ECO:0000314"/>
    <property type="project" value="UniProtKB"/>
</dbReference>
<dbReference type="GO" id="GO:0080144">
    <property type="term" value="P:intracellular amino acid homeostasis"/>
    <property type="evidence" value="ECO:0000314"/>
    <property type="project" value="UniProtKB"/>
</dbReference>
<dbReference type="GO" id="GO:1903826">
    <property type="term" value="P:L-arginine transmembrane transport"/>
    <property type="evidence" value="ECO:0000314"/>
    <property type="project" value="UniProtKB"/>
</dbReference>
<dbReference type="GO" id="GO:0015819">
    <property type="term" value="P:lysine transport"/>
    <property type="evidence" value="ECO:0000314"/>
    <property type="project" value="UniProtKB"/>
</dbReference>
<dbReference type="GO" id="GO:0010508">
    <property type="term" value="P:positive regulation of autophagy"/>
    <property type="evidence" value="ECO:0000315"/>
    <property type="project" value="UniProtKB"/>
</dbReference>
<dbReference type="FunFam" id="1.20.1280.290:FF:000049">
    <property type="entry name" value="Lysosomal amino acid transporter 1"/>
    <property type="match status" value="1"/>
</dbReference>
<dbReference type="FunFam" id="1.20.1280.290:FF:000009">
    <property type="entry name" value="PQ loop repeat family protein"/>
    <property type="match status" value="1"/>
</dbReference>
<dbReference type="Gene3D" id="1.20.1280.290">
    <property type="match status" value="2"/>
</dbReference>
<dbReference type="InterPro" id="IPR051415">
    <property type="entry name" value="LAAT-1"/>
</dbReference>
<dbReference type="InterPro" id="IPR006603">
    <property type="entry name" value="PQ-loop_rpt"/>
</dbReference>
<dbReference type="PANTHER" id="PTHR16201:SF34">
    <property type="entry name" value="LYSOSOMAL AMINO ACID TRANSPORTER 1"/>
    <property type="match status" value="1"/>
</dbReference>
<dbReference type="PANTHER" id="PTHR16201">
    <property type="entry name" value="SEVEN TRANSMEMBRANE PROTEIN 1-RELATED"/>
    <property type="match status" value="1"/>
</dbReference>
<dbReference type="Pfam" id="PF04193">
    <property type="entry name" value="PQ-loop"/>
    <property type="match status" value="2"/>
</dbReference>
<dbReference type="SMART" id="SM00679">
    <property type="entry name" value="CTNS"/>
    <property type="match status" value="2"/>
</dbReference>
<reference key="1">
    <citation type="journal article" date="1998" name="Science">
        <title>Genome sequence of the nematode C. elegans: a platform for investigating biology.</title>
        <authorList>
            <consortium name="The C. elegans sequencing consortium"/>
        </authorList>
    </citation>
    <scope>NUCLEOTIDE SEQUENCE [LARGE SCALE GENOMIC DNA]</scope>
    <source>
        <strain>Bristol N2</strain>
    </source>
</reference>
<reference key="2">
    <citation type="journal article" date="2012" name="Science">
        <title>LAAT-1 is the lysosomal lysine/arginine transporter that maintains amino acid homeostasis.</title>
        <authorList>
            <person name="Liu B."/>
            <person name="Du H."/>
            <person name="Rutkowski R."/>
            <person name="Gartner A."/>
            <person name="Wang X."/>
        </authorList>
    </citation>
    <scope>FUNCTION</scope>
    <scope>SUBCELLULAR LOCATION</scope>
    <scope>DISRUPTION PHENOTYPE</scope>
    <scope>MUTAGENESIS OF PRO-59 AND 303-LEU-LEU-304</scope>
</reference>
<reference key="3">
    <citation type="journal article" date="2014" name="EMBO Rep.">
        <title>PI3P phosphatase activity is required for autophagosome maturation and autolysosome formation.</title>
        <authorList>
            <person name="Wu Y."/>
            <person name="Cheng S."/>
            <person name="Zhao H."/>
            <person name="Zou W."/>
            <person name="Yoshina S."/>
            <person name="Mitani S."/>
            <person name="Zhang H."/>
            <person name="Wang X."/>
        </authorList>
    </citation>
    <scope>FUNCTION</scope>
</reference>
<proteinExistence type="evidence at protein level"/>
<protein>
    <recommendedName>
        <fullName>Lysosomal amino acid transporter 1</fullName>
    </recommendedName>
</protein>